<gene>
    <name type="ordered locus">spr0652</name>
</gene>
<name>Y652_STRR6</name>
<comment type="function">
    <text evidence="1">May bind long-chain fatty acids, such as palmitate, and may play a role in lipid transport or fatty acid metabolism.</text>
</comment>
<protein>
    <recommendedName>
        <fullName>DegV domain-containing protein spr0652</fullName>
    </recommendedName>
</protein>
<dbReference type="EMBL" id="AE007317">
    <property type="protein sequence ID" value="AAK99456.1"/>
    <property type="molecule type" value="Genomic_DNA"/>
</dbReference>
<dbReference type="PIR" id="D97953">
    <property type="entry name" value="D97953"/>
</dbReference>
<dbReference type="RefSeq" id="NP_358246.1">
    <property type="nucleotide sequence ID" value="NC_003098.1"/>
</dbReference>
<dbReference type="RefSeq" id="WP_000219939.1">
    <property type="nucleotide sequence ID" value="NC_003098.1"/>
</dbReference>
<dbReference type="PDB" id="6CNG">
    <property type="method" value="X-ray"/>
    <property type="resolution" value="1.47 A"/>
    <property type="chains" value="A/D=1-281"/>
</dbReference>
<dbReference type="PDBsum" id="6CNG"/>
<dbReference type="SMR" id="Q8DQI6"/>
<dbReference type="STRING" id="171101.spr0652"/>
<dbReference type="KEGG" id="spr:spr0652"/>
<dbReference type="PATRIC" id="fig|171101.6.peg.724"/>
<dbReference type="eggNOG" id="COG1307">
    <property type="taxonomic scope" value="Bacteria"/>
</dbReference>
<dbReference type="HOGENOM" id="CLU_048251_2_0_9"/>
<dbReference type="Proteomes" id="UP000000586">
    <property type="component" value="Chromosome"/>
</dbReference>
<dbReference type="GO" id="GO:0008289">
    <property type="term" value="F:lipid binding"/>
    <property type="evidence" value="ECO:0007669"/>
    <property type="project" value="UniProtKB-KW"/>
</dbReference>
<dbReference type="Gene3D" id="3.30.1180.10">
    <property type="match status" value="1"/>
</dbReference>
<dbReference type="Gene3D" id="2.20.28.50">
    <property type="entry name" value="degv family protein"/>
    <property type="match status" value="1"/>
</dbReference>
<dbReference type="Gene3D" id="3.40.50.10440">
    <property type="entry name" value="Dihydroxyacetone kinase, domain 1"/>
    <property type="match status" value="1"/>
</dbReference>
<dbReference type="InterPro" id="IPR003797">
    <property type="entry name" value="DegV"/>
</dbReference>
<dbReference type="InterPro" id="IPR043168">
    <property type="entry name" value="DegV_C"/>
</dbReference>
<dbReference type="InterPro" id="IPR050270">
    <property type="entry name" value="DegV_domain_contain"/>
</dbReference>
<dbReference type="NCBIfam" id="TIGR00762">
    <property type="entry name" value="DegV"/>
    <property type="match status" value="1"/>
</dbReference>
<dbReference type="PANTHER" id="PTHR33434">
    <property type="entry name" value="DEGV DOMAIN-CONTAINING PROTEIN DR_1986-RELATED"/>
    <property type="match status" value="1"/>
</dbReference>
<dbReference type="PANTHER" id="PTHR33434:SF2">
    <property type="entry name" value="FATTY ACID-BINDING PROTEIN TM_1468"/>
    <property type="match status" value="1"/>
</dbReference>
<dbReference type="Pfam" id="PF02645">
    <property type="entry name" value="DegV"/>
    <property type="match status" value="1"/>
</dbReference>
<dbReference type="SUPFAM" id="SSF82549">
    <property type="entry name" value="DAK1/DegV-like"/>
    <property type="match status" value="1"/>
</dbReference>
<dbReference type="PROSITE" id="PS51482">
    <property type="entry name" value="DEGV"/>
    <property type="match status" value="1"/>
</dbReference>
<accession>Q8DQI6</accession>
<sequence length="281" mass="30665">MTWKIIADSGCDYRQLPTPAINTTFVSVPLTIQVADQVFVDDASLDIDQMMETMYATAEASKSACPSPDDYLRAFEGAKNIFLVTITGTLSGSHNSAQLAKNIYLEDHPDTKIHVIDSLSAGGEVDLLVEKLNDLIDQGLSFEEVVEAITAYQEKTKLLFVLAKVDNLVKNGRLSKLIGTVVGLLNIRMVGKASETGTLELLQKARGSKKSVQAAYDELVKAGYAGGRIVMAQRNNEKCCQQLSERIRETFPQADIKILPTSGLCSFYAEEGGLLMGYEID</sequence>
<feature type="chain" id="PRO_0000209797" description="DegV domain-containing protein spr0652">
    <location>
        <begin position="1"/>
        <end position="281"/>
    </location>
</feature>
<feature type="domain" description="DegV" evidence="3">
    <location>
        <begin position="3"/>
        <end position="280"/>
    </location>
</feature>
<feature type="binding site" evidence="2">
    <location>
        <position position="63"/>
    </location>
    <ligand>
        <name>hexadecanoate</name>
        <dbReference type="ChEBI" id="CHEBI:7896"/>
    </ligand>
</feature>
<feature type="binding site" evidence="2">
    <location>
        <position position="91"/>
    </location>
    <ligand>
        <name>hexadecanoate</name>
        <dbReference type="ChEBI" id="CHEBI:7896"/>
    </ligand>
</feature>
<feature type="strand" evidence="4">
    <location>
        <begin position="3"/>
        <end position="8"/>
    </location>
</feature>
<feature type="strand" evidence="4">
    <location>
        <begin position="23"/>
        <end position="28"/>
    </location>
</feature>
<feature type="strand" evidence="4">
    <location>
        <begin position="31"/>
        <end position="34"/>
    </location>
</feature>
<feature type="strand" evidence="4">
    <location>
        <begin position="37"/>
        <end position="40"/>
    </location>
</feature>
<feature type="helix" evidence="4">
    <location>
        <begin position="47"/>
        <end position="56"/>
    </location>
</feature>
<feature type="strand" evidence="4">
    <location>
        <begin position="62"/>
        <end position="64"/>
    </location>
</feature>
<feature type="helix" evidence="4">
    <location>
        <begin position="68"/>
        <end position="75"/>
    </location>
</feature>
<feature type="strand" evidence="4">
    <location>
        <begin position="79"/>
        <end position="86"/>
    </location>
</feature>
<feature type="turn" evidence="4">
    <location>
        <begin position="88"/>
        <end position="90"/>
    </location>
</feature>
<feature type="helix" evidence="4">
    <location>
        <begin position="93"/>
        <end position="107"/>
    </location>
</feature>
<feature type="strand" evidence="4">
    <location>
        <begin position="112"/>
        <end position="117"/>
    </location>
</feature>
<feature type="helix" evidence="4">
    <location>
        <begin position="123"/>
        <end position="137"/>
    </location>
</feature>
<feature type="helix" evidence="4">
    <location>
        <begin position="142"/>
        <end position="154"/>
    </location>
</feature>
<feature type="strand" evidence="4">
    <location>
        <begin position="156"/>
        <end position="163"/>
    </location>
</feature>
<feature type="helix" evidence="4">
    <location>
        <begin position="166"/>
        <end position="170"/>
    </location>
</feature>
<feature type="helix" evidence="4">
    <location>
        <begin position="176"/>
        <end position="181"/>
    </location>
</feature>
<feature type="strand" evidence="4">
    <location>
        <begin position="182"/>
        <end position="193"/>
    </location>
</feature>
<feature type="strand" evidence="4">
    <location>
        <begin position="197"/>
        <end position="207"/>
    </location>
</feature>
<feature type="helix" evidence="4">
    <location>
        <begin position="208"/>
        <end position="222"/>
    </location>
</feature>
<feature type="strand" evidence="4">
    <location>
        <begin position="224"/>
        <end position="235"/>
    </location>
</feature>
<feature type="helix" evidence="4">
    <location>
        <begin position="237"/>
        <end position="250"/>
    </location>
</feature>
<feature type="strand" evidence="4">
    <location>
        <begin position="255"/>
        <end position="260"/>
    </location>
</feature>
<feature type="helix" evidence="4">
    <location>
        <begin position="263"/>
        <end position="269"/>
    </location>
</feature>
<feature type="strand" evidence="4">
    <location>
        <begin position="274"/>
        <end position="280"/>
    </location>
</feature>
<proteinExistence type="evidence at protein level"/>
<keyword id="KW-0002">3D-structure</keyword>
<keyword id="KW-0446">Lipid-binding</keyword>
<keyword id="KW-1185">Reference proteome</keyword>
<organism>
    <name type="scientific">Streptococcus pneumoniae (strain ATCC BAA-255 / R6)</name>
    <dbReference type="NCBI Taxonomy" id="171101"/>
    <lineage>
        <taxon>Bacteria</taxon>
        <taxon>Bacillati</taxon>
        <taxon>Bacillota</taxon>
        <taxon>Bacilli</taxon>
        <taxon>Lactobacillales</taxon>
        <taxon>Streptococcaceae</taxon>
        <taxon>Streptococcus</taxon>
    </lineage>
</organism>
<reference key="1">
    <citation type="journal article" date="2001" name="J. Bacteriol.">
        <title>Genome of the bacterium Streptococcus pneumoniae strain R6.</title>
        <authorList>
            <person name="Hoskins J."/>
            <person name="Alborn W.E. Jr."/>
            <person name="Arnold J."/>
            <person name="Blaszczak L.C."/>
            <person name="Burgett S."/>
            <person name="DeHoff B.S."/>
            <person name="Estrem S.T."/>
            <person name="Fritz L."/>
            <person name="Fu D.-J."/>
            <person name="Fuller W."/>
            <person name="Geringer C."/>
            <person name="Gilmour R."/>
            <person name="Glass J.S."/>
            <person name="Khoja H."/>
            <person name="Kraft A.R."/>
            <person name="Lagace R.E."/>
            <person name="LeBlanc D.J."/>
            <person name="Lee L.N."/>
            <person name="Lefkowitz E.J."/>
            <person name="Lu J."/>
            <person name="Matsushima P."/>
            <person name="McAhren S.M."/>
            <person name="McHenney M."/>
            <person name="McLeaster K."/>
            <person name="Mundy C.W."/>
            <person name="Nicas T.I."/>
            <person name="Norris F.H."/>
            <person name="O'Gara M."/>
            <person name="Peery R.B."/>
            <person name="Robertson G.T."/>
            <person name="Rockey P."/>
            <person name="Sun P.-M."/>
            <person name="Winkler M.E."/>
            <person name="Yang Y."/>
            <person name="Young-Bellido M."/>
            <person name="Zhao G."/>
            <person name="Zook C.A."/>
            <person name="Baltz R.H."/>
            <person name="Jaskunas S.R."/>
            <person name="Rosteck P.R. Jr."/>
            <person name="Skatrud P.L."/>
            <person name="Glass J.I."/>
        </authorList>
    </citation>
    <scope>NUCLEOTIDE SEQUENCE [LARGE SCALE GENOMIC DNA]</scope>
    <source>
        <strain>ATCC BAA-255 / R6</strain>
    </source>
</reference>
<evidence type="ECO:0000250" key="1"/>
<evidence type="ECO:0000250" key="2">
    <source>
        <dbReference type="UniProtKB" id="Q9X1H9"/>
    </source>
</evidence>
<evidence type="ECO:0000255" key="3">
    <source>
        <dbReference type="PROSITE-ProRule" id="PRU00815"/>
    </source>
</evidence>
<evidence type="ECO:0007829" key="4">
    <source>
        <dbReference type="PDB" id="6CNG"/>
    </source>
</evidence>